<keyword id="KW-0488">Methylation</keyword>
<keyword id="KW-0687">Ribonucleoprotein</keyword>
<keyword id="KW-0689">Ribosomal protein</keyword>
<keyword id="KW-0694">RNA-binding</keyword>
<keyword id="KW-0699">rRNA-binding</keyword>
<evidence type="ECO:0000255" key="1">
    <source>
        <dbReference type="HAMAP-Rule" id="MF_00736"/>
    </source>
</evidence>
<evidence type="ECO:0000305" key="2"/>
<comment type="function">
    <text evidence="1">Forms part of the ribosomal stalk which helps the ribosome interact with GTP-bound translation factors.</text>
</comment>
<comment type="subunit">
    <text evidence="1">Part of the ribosomal stalk of the 50S ribosomal subunit. Interacts with L10 and the large rRNA to form the base of the stalk. L10 forms an elongated spine to which L12 dimers bind in a sequential fashion forming a multimeric L10(L12)X complex.</text>
</comment>
<comment type="PTM">
    <text evidence="1">One or more lysine residues are methylated.</text>
</comment>
<comment type="similarity">
    <text evidence="1">Belongs to the universal ribosomal protein uL11 family.</text>
</comment>
<dbReference type="EMBL" id="CP000726">
    <property type="protein sequence ID" value="ABS32958.1"/>
    <property type="molecule type" value="Genomic_DNA"/>
</dbReference>
<dbReference type="RefSeq" id="WP_003357261.1">
    <property type="nucleotide sequence ID" value="NC_009697.1"/>
</dbReference>
<dbReference type="SMR" id="A7FZ81"/>
<dbReference type="GeneID" id="5186670"/>
<dbReference type="KEGG" id="cba:CLB_3549"/>
<dbReference type="HOGENOM" id="CLU_074237_2_1_9"/>
<dbReference type="GO" id="GO:0022625">
    <property type="term" value="C:cytosolic large ribosomal subunit"/>
    <property type="evidence" value="ECO:0007669"/>
    <property type="project" value="TreeGrafter"/>
</dbReference>
<dbReference type="GO" id="GO:0070180">
    <property type="term" value="F:large ribosomal subunit rRNA binding"/>
    <property type="evidence" value="ECO:0007669"/>
    <property type="project" value="UniProtKB-UniRule"/>
</dbReference>
<dbReference type="GO" id="GO:0003735">
    <property type="term" value="F:structural constituent of ribosome"/>
    <property type="evidence" value="ECO:0007669"/>
    <property type="project" value="InterPro"/>
</dbReference>
<dbReference type="GO" id="GO:0006412">
    <property type="term" value="P:translation"/>
    <property type="evidence" value="ECO:0007669"/>
    <property type="project" value="UniProtKB-UniRule"/>
</dbReference>
<dbReference type="CDD" id="cd00349">
    <property type="entry name" value="Ribosomal_L11"/>
    <property type="match status" value="1"/>
</dbReference>
<dbReference type="FunFam" id="1.10.10.250:FF:000001">
    <property type="entry name" value="50S ribosomal protein L11"/>
    <property type="match status" value="1"/>
</dbReference>
<dbReference type="FunFam" id="3.30.1550.10:FF:000001">
    <property type="entry name" value="50S ribosomal protein L11"/>
    <property type="match status" value="1"/>
</dbReference>
<dbReference type="Gene3D" id="1.10.10.250">
    <property type="entry name" value="Ribosomal protein L11, C-terminal domain"/>
    <property type="match status" value="1"/>
</dbReference>
<dbReference type="Gene3D" id="3.30.1550.10">
    <property type="entry name" value="Ribosomal protein L11/L12, N-terminal domain"/>
    <property type="match status" value="1"/>
</dbReference>
<dbReference type="HAMAP" id="MF_00736">
    <property type="entry name" value="Ribosomal_uL11"/>
    <property type="match status" value="1"/>
</dbReference>
<dbReference type="InterPro" id="IPR000911">
    <property type="entry name" value="Ribosomal_uL11"/>
</dbReference>
<dbReference type="InterPro" id="IPR006519">
    <property type="entry name" value="Ribosomal_uL11_bac-typ"/>
</dbReference>
<dbReference type="InterPro" id="IPR020783">
    <property type="entry name" value="Ribosomal_uL11_C"/>
</dbReference>
<dbReference type="InterPro" id="IPR036769">
    <property type="entry name" value="Ribosomal_uL11_C_sf"/>
</dbReference>
<dbReference type="InterPro" id="IPR020784">
    <property type="entry name" value="Ribosomal_uL11_N"/>
</dbReference>
<dbReference type="InterPro" id="IPR036796">
    <property type="entry name" value="Ribosomal_uL11_N_sf"/>
</dbReference>
<dbReference type="NCBIfam" id="TIGR01632">
    <property type="entry name" value="L11_bact"/>
    <property type="match status" value="1"/>
</dbReference>
<dbReference type="PANTHER" id="PTHR11661">
    <property type="entry name" value="60S RIBOSOMAL PROTEIN L12"/>
    <property type="match status" value="1"/>
</dbReference>
<dbReference type="PANTHER" id="PTHR11661:SF1">
    <property type="entry name" value="LARGE RIBOSOMAL SUBUNIT PROTEIN UL11M"/>
    <property type="match status" value="1"/>
</dbReference>
<dbReference type="Pfam" id="PF00298">
    <property type="entry name" value="Ribosomal_L11"/>
    <property type="match status" value="1"/>
</dbReference>
<dbReference type="Pfam" id="PF03946">
    <property type="entry name" value="Ribosomal_L11_N"/>
    <property type="match status" value="1"/>
</dbReference>
<dbReference type="SMART" id="SM00649">
    <property type="entry name" value="RL11"/>
    <property type="match status" value="1"/>
</dbReference>
<dbReference type="SUPFAM" id="SSF54747">
    <property type="entry name" value="Ribosomal L11/L12e N-terminal domain"/>
    <property type="match status" value="1"/>
</dbReference>
<dbReference type="SUPFAM" id="SSF46906">
    <property type="entry name" value="Ribosomal protein L11, C-terminal domain"/>
    <property type="match status" value="1"/>
</dbReference>
<organism>
    <name type="scientific">Clostridium botulinum (strain ATCC 19397 / Type A)</name>
    <dbReference type="NCBI Taxonomy" id="441770"/>
    <lineage>
        <taxon>Bacteria</taxon>
        <taxon>Bacillati</taxon>
        <taxon>Bacillota</taxon>
        <taxon>Clostridia</taxon>
        <taxon>Eubacteriales</taxon>
        <taxon>Clostridiaceae</taxon>
        <taxon>Clostridium</taxon>
    </lineage>
</organism>
<protein>
    <recommendedName>
        <fullName evidence="1">Large ribosomal subunit protein uL11</fullName>
    </recommendedName>
    <alternativeName>
        <fullName evidence="2">50S ribosomal protein L11</fullName>
    </alternativeName>
</protein>
<name>RL11_CLOB1</name>
<proteinExistence type="inferred from homology"/>
<accession>A7FZ81</accession>
<sequence length="141" mass="14703">MAKKVVGMIKLQLPAGKASPAPPVGPALGQHGVNIMGFCKEFNAKTANQAGLIIPVVITVYQDRSFSFILKTPPAAVLLKKAAGIESGSGVPNKTKVAKVTKDQIREIAETKMPDLNAGSIETAMSMIAGTARSMGITVEE</sequence>
<reference key="1">
    <citation type="journal article" date="2007" name="PLoS ONE">
        <title>Analysis of the neurotoxin complex genes in Clostridium botulinum A1-A4 and B1 strains: BoNT/A3, /Ba4 and /B1 clusters are located within plasmids.</title>
        <authorList>
            <person name="Smith T.J."/>
            <person name="Hill K.K."/>
            <person name="Foley B.T."/>
            <person name="Detter J.C."/>
            <person name="Munk A.C."/>
            <person name="Bruce D.C."/>
            <person name="Doggett N.A."/>
            <person name="Smith L.A."/>
            <person name="Marks J.D."/>
            <person name="Xie G."/>
            <person name="Brettin T.S."/>
        </authorList>
    </citation>
    <scope>NUCLEOTIDE SEQUENCE [LARGE SCALE GENOMIC DNA]</scope>
    <source>
        <strain>ATCC 19397 / Type A</strain>
    </source>
</reference>
<feature type="chain" id="PRO_1000046167" description="Large ribosomal subunit protein uL11">
    <location>
        <begin position="1"/>
        <end position="141"/>
    </location>
</feature>
<gene>
    <name evidence="1" type="primary">rplK</name>
    <name type="ordered locus">CLB_3549</name>
</gene>